<organism>
    <name type="scientific">Enterobacteria phage PRD1</name>
    <name type="common">Bacteriophage PRD1</name>
    <dbReference type="NCBI Taxonomy" id="10658"/>
    <lineage>
        <taxon>Viruses</taxon>
        <taxon>Varidnaviria</taxon>
        <taxon>Bamfordvirae</taxon>
        <taxon>Preplasmiviricota</taxon>
        <taxon>Tectiliviricetes</taxon>
        <taxon>Kalamavirales</taxon>
        <taxon>Tectiviridae</taxon>
        <taxon>Alphatectivirus</taxon>
        <taxon>Alphatectivirus PRD1</taxon>
    </lineage>
</organism>
<proteinExistence type="evidence at protein level"/>
<gene>
    <name type="primary">XXX</name>
    <name type="synonym">P</name>
</gene>
<reference key="1">
    <citation type="journal article" date="1991" name="Virology">
        <title>Genome organization of membrane-containing bacteriophage PRD1.</title>
        <authorList>
            <person name="Bamford J.K.H."/>
            <person name="Haenninen A.-L."/>
            <person name="Pakula T.M."/>
            <person name="Ojala P.M."/>
            <person name="Kalkkinen N."/>
            <person name="Frilander M."/>
            <person name="Bamford D.H."/>
        </authorList>
    </citation>
    <scope>NUCLEOTIDE SEQUENCE [GENOMIC DNA]</scope>
    <scope>PROTEIN SEQUENCE OF 2-10</scope>
</reference>
<reference key="2">
    <citation type="journal article" date="2005" name="J. Mol. Biol.">
        <title>A snapshot of viral evolution from genome analysis of the tectiviridae family.</title>
        <authorList>
            <person name="Saren A.M."/>
            <person name="Ravantti J.J."/>
            <person name="Benson S.D."/>
            <person name="Burnett R.M."/>
            <person name="Paulin L."/>
            <person name="Bamford D.H."/>
            <person name="Bamford J.K.H."/>
        </authorList>
    </citation>
    <scope>NUCLEOTIDE SEQUENCE [GENOMIC DNA]</scope>
</reference>
<reference key="3">
    <citation type="journal article" date="2001" name="J. Mol. Biol.">
        <title>A minor capsid protein P30 is essential for bacteriophage PRD1 capsid assembly.</title>
        <authorList>
            <person name="Rydman P.S."/>
            <person name="Bamford J.K.H."/>
            <person name="Bamford D.H."/>
        </authorList>
    </citation>
    <scope>FUNCTION</scope>
</reference>
<reference key="4">
    <citation type="journal article" date="2004" name="Nature">
        <title>Insights into assembly from structural analysis of bacteriophage PRD1.</title>
        <authorList>
            <person name="Abrescia N.G.A."/>
            <person name="Cockburn J.J.B."/>
            <person name="Grimes J.M."/>
            <person name="Sutton G.C."/>
            <person name="Diprose J.M."/>
            <person name="Butcher S.J."/>
            <person name="Fuller S.D."/>
            <person name="San Martin C."/>
            <person name="Burnett R.M."/>
            <person name="Stuart D.I."/>
            <person name="Bamford D.H."/>
            <person name="Bamford J.K.H."/>
        </authorList>
    </citation>
    <scope>X-RAY CRYSTALLOGRAPHY (4.2 ANGSTROMS)</scope>
</reference>
<keyword id="KW-0002">3D-structure</keyword>
<keyword id="KW-0167">Capsid protein</keyword>
<keyword id="KW-0903">Direct protein sequencing</keyword>
<keyword id="KW-1185">Reference proteome</keyword>
<keyword id="KW-0946">Virion</keyword>
<sequence>MALINPQFPYAGPVPIPGPAPTETMPLLNYRVEGRIAGIQQARQFMPFLQGPHRAVAEQTYHAIGTGIQMGQTFNQPLINTQEG</sequence>
<dbReference type="EMBL" id="AY848689">
    <property type="protein sequence ID" value="AAX45917.1"/>
    <property type="molecule type" value="Genomic_DNA"/>
</dbReference>
<dbReference type="PIR" id="H36776">
    <property type="entry name" value="WMBPWB"/>
</dbReference>
<dbReference type="RefSeq" id="NP_040697.1">
    <property type="nucleotide sequence ID" value="NC_001421.2"/>
</dbReference>
<dbReference type="RefSeq" id="YP_009639975.1">
    <property type="nucleotide sequence ID" value="NC_001421.2"/>
</dbReference>
<dbReference type="PDB" id="1W8X">
    <property type="method" value="X-ray"/>
    <property type="resolution" value="4.20 A"/>
    <property type="chains" value="M=2-84"/>
</dbReference>
<dbReference type="PDBsum" id="1W8X"/>
<dbReference type="SMR" id="P27391"/>
<dbReference type="GeneID" id="1260943"/>
<dbReference type="OrthoDB" id="33461at10239"/>
<dbReference type="Proteomes" id="UP000002143">
    <property type="component" value="Segment"/>
</dbReference>
<dbReference type="GO" id="GO:0019028">
    <property type="term" value="C:viral capsid"/>
    <property type="evidence" value="ECO:0007669"/>
    <property type="project" value="UniProtKB-KW"/>
</dbReference>
<dbReference type="GO" id="GO:0019069">
    <property type="term" value="P:viral capsid assembly"/>
    <property type="evidence" value="ECO:0000315"/>
    <property type="project" value="CACAO"/>
</dbReference>
<dbReference type="InterPro" id="IPR015379">
    <property type="entry name" value="Tecti-min-caps"/>
</dbReference>
<dbReference type="Pfam" id="PF09300">
    <property type="entry name" value="Tecti-min-caps"/>
    <property type="match status" value="1"/>
</dbReference>
<comment type="function">
    <text evidence="1">Minor capsid protein essential for stable capsid assembly of complete particles.</text>
</comment>
<comment type="subunit">
    <text>Dimer.</text>
</comment>
<comment type="subcellular location">
    <subcellularLocation>
        <location>Virion</location>
    </subcellularLocation>
    <text>The capsid contains 60 copies of P30.</text>
</comment>
<feature type="initiator methionine" description="Removed; by host" evidence="2">
    <location>
        <position position="1"/>
    </location>
</feature>
<feature type="chain" id="PRO_0000165362" description="Minor capsid protein P30">
    <location>
        <begin position="2"/>
        <end position="84"/>
    </location>
</feature>
<evidence type="ECO:0000269" key="1">
    <source>
    </source>
</evidence>
<evidence type="ECO:0000269" key="2">
    <source>
    </source>
</evidence>
<accession>P27391</accession>
<accession>Q3T4M5</accession>
<protein>
    <recommendedName>
        <fullName>Minor capsid protein P30</fullName>
        <shortName>Protein P</shortName>
    </recommendedName>
    <alternativeName>
        <fullName>GpP</fullName>
    </alternativeName>
</protein>
<organismHost>
    <name type="scientific">Acinetobacter calcoaceticus</name>
    <dbReference type="NCBI Taxonomy" id="471"/>
</organismHost>
<organismHost>
    <name type="scientific">Escherichia coli</name>
    <dbReference type="NCBI Taxonomy" id="562"/>
</organismHost>
<organismHost>
    <name type="scientific">Proteus mirabilis</name>
    <dbReference type="NCBI Taxonomy" id="584"/>
</organismHost>
<organismHost>
    <name type="scientific">Pseudomonas aeruginosa</name>
    <dbReference type="NCBI Taxonomy" id="287"/>
</organismHost>
<organismHost>
    <name type="scientific">Pseudomonas fluorescens</name>
    <dbReference type="NCBI Taxonomy" id="294"/>
</organismHost>
<organismHost>
    <name type="scientific">Pseudomonas putida</name>
    <name type="common">Arthrobacter siderocapsulatus</name>
    <dbReference type="NCBI Taxonomy" id="303"/>
</organismHost>
<organismHost>
    <name type="scientific">Salmonella typhimurium</name>
    <dbReference type="NCBI Taxonomy" id="90371"/>
</organismHost>
<organismHost>
    <name type="scientific">Vibrio cholerae</name>
    <dbReference type="NCBI Taxonomy" id="666"/>
</organismHost>
<name>VP30_BPPRD</name>